<reference key="1">
    <citation type="journal article" date="2009" name="PLoS Genet.">
        <title>Organised genome dynamics in the Escherichia coli species results in highly diverse adaptive paths.</title>
        <authorList>
            <person name="Touchon M."/>
            <person name="Hoede C."/>
            <person name="Tenaillon O."/>
            <person name="Barbe V."/>
            <person name="Baeriswyl S."/>
            <person name="Bidet P."/>
            <person name="Bingen E."/>
            <person name="Bonacorsi S."/>
            <person name="Bouchier C."/>
            <person name="Bouvet O."/>
            <person name="Calteau A."/>
            <person name="Chiapello H."/>
            <person name="Clermont O."/>
            <person name="Cruveiller S."/>
            <person name="Danchin A."/>
            <person name="Diard M."/>
            <person name="Dossat C."/>
            <person name="Karoui M.E."/>
            <person name="Frapy E."/>
            <person name="Garry L."/>
            <person name="Ghigo J.M."/>
            <person name="Gilles A.M."/>
            <person name="Johnson J."/>
            <person name="Le Bouguenec C."/>
            <person name="Lescat M."/>
            <person name="Mangenot S."/>
            <person name="Martinez-Jehanne V."/>
            <person name="Matic I."/>
            <person name="Nassif X."/>
            <person name="Oztas S."/>
            <person name="Petit M.A."/>
            <person name="Pichon C."/>
            <person name="Rouy Z."/>
            <person name="Ruf C.S."/>
            <person name="Schneider D."/>
            <person name="Tourret J."/>
            <person name="Vacherie B."/>
            <person name="Vallenet D."/>
            <person name="Medigue C."/>
            <person name="Rocha E.P.C."/>
            <person name="Denamur E."/>
        </authorList>
    </citation>
    <scope>NUCLEOTIDE SEQUENCE [LARGE SCALE GENOMIC DNA]</scope>
    <source>
        <strain>IAI1</strain>
    </source>
</reference>
<organism>
    <name type="scientific">Escherichia coli O8 (strain IAI1)</name>
    <dbReference type="NCBI Taxonomy" id="585034"/>
    <lineage>
        <taxon>Bacteria</taxon>
        <taxon>Pseudomonadati</taxon>
        <taxon>Pseudomonadota</taxon>
        <taxon>Gammaproteobacteria</taxon>
        <taxon>Enterobacterales</taxon>
        <taxon>Enterobacteriaceae</taxon>
        <taxon>Escherichia</taxon>
    </lineage>
</organism>
<accession>B7M2B1</accession>
<proteinExistence type="inferred from homology"/>
<gene>
    <name evidence="1" type="primary">rsmF</name>
    <name type="ordered locus">ECIAI1_1906</name>
</gene>
<evidence type="ECO:0000255" key="1">
    <source>
        <dbReference type="HAMAP-Rule" id="MF_01579"/>
    </source>
</evidence>
<sequence length="479" mass="53240">MAQHTVYFPDAFLTQMREAMPSTLSFDDFLAACQRPLRRSIRVNTLKISVADFLQLTAPYGWTLTPIPWCEEGFWIERDNEDALPLGSTAEHLSGLFYIQEASSMLPVAALFADDNAPQRVMDVAAAPGSKTTQIAARMNNEGAILANEFSASRVKVLHANISRCGISNVALTHFDGRVFGAAVPEMFDAILLDAPCSGEGVVRKDPDALKNWSPESNQEIAATQRELIDSAFHALRPGGTLVYSTCTLNQEENEAVCLWLKETYPDAVEFLPLGDLFPGANKALTEEGFLHVFPQIYDCEGFFVARLRKTQAIPALPAPKYKVGNFPFSPVKDREAGQIRQAAAGVGLNWDENLRLWQRDKELWLFPVGIEALIGKVRFSRLGIKLAETHNKGYRWQHEAVIALASPDNMNAFELTPQEAEEWYRGRDVYPQAAPVADDVLVTFQHQPIGLAKRIGSRLKNSYPRELVRDGKLFTGNA</sequence>
<comment type="function">
    <text evidence="1">Specifically methylates the cytosine at position 1407 (m5C1407) of 16S rRNA.</text>
</comment>
<comment type="catalytic activity">
    <reaction evidence="1">
        <text>cytidine(1407) in 16S rRNA + S-adenosyl-L-methionine = 5-methylcytidine(1407) in 16S rRNA + S-adenosyl-L-homocysteine + H(+)</text>
        <dbReference type="Rhea" id="RHEA:42756"/>
        <dbReference type="Rhea" id="RHEA-COMP:10223"/>
        <dbReference type="Rhea" id="RHEA-COMP:10224"/>
        <dbReference type="ChEBI" id="CHEBI:15378"/>
        <dbReference type="ChEBI" id="CHEBI:57856"/>
        <dbReference type="ChEBI" id="CHEBI:59789"/>
        <dbReference type="ChEBI" id="CHEBI:74483"/>
        <dbReference type="ChEBI" id="CHEBI:82748"/>
        <dbReference type="EC" id="2.1.1.178"/>
    </reaction>
</comment>
<comment type="subcellular location">
    <subcellularLocation>
        <location evidence="1">Cytoplasm</location>
    </subcellularLocation>
</comment>
<comment type="similarity">
    <text evidence="1">Belongs to the class I-like SAM-binding methyltransferase superfamily. RsmB/NOP family.</text>
</comment>
<feature type="chain" id="PRO_1000147567" description="Ribosomal RNA small subunit methyltransferase F">
    <location>
        <begin position="1"/>
        <end position="479"/>
    </location>
</feature>
<feature type="active site" description="Nucleophile" evidence="1">
    <location>
        <position position="247"/>
    </location>
</feature>
<feature type="binding site" evidence="1">
    <location>
        <begin position="125"/>
        <end position="131"/>
    </location>
    <ligand>
        <name>S-adenosyl-L-methionine</name>
        <dbReference type="ChEBI" id="CHEBI:59789"/>
    </ligand>
</feature>
<feature type="binding site" evidence="1">
    <location>
        <position position="149"/>
    </location>
    <ligand>
        <name>S-adenosyl-L-methionine</name>
        <dbReference type="ChEBI" id="CHEBI:59789"/>
    </ligand>
</feature>
<feature type="binding site" evidence="1">
    <location>
        <position position="176"/>
    </location>
    <ligand>
        <name>S-adenosyl-L-methionine</name>
        <dbReference type="ChEBI" id="CHEBI:59789"/>
    </ligand>
</feature>
<feature type="binding site" evidence="1">
    <location>
        <position position="194"/>
    </location>
    <ligand>
        <name>S-adenosyl-L-methionine</name>
        <dbReference type="ChEBI" id="CHEBI:59789"/>
    </ligand>
</feature>
<keyword id="KW-0963">Cytoplasm</keyword>
<keyword id="KW-0489">Methyltransferase</keyword>
<keyword id="KW-0694">RNA-binding</keyword>
<keyword id="KW-0698">rRNA processing</keyword>
<keyword id="KW-0949">S-adenosyl-L-methionine</keyword>
<keyword id="KW-0808">Transferase</keyword>
<dbReference type="EC" id="2.1.1.178" evidence="1"/>
<dbReference type="EMBL" id="CU928160">
    <property type="protein sequence ID" value="CAQ98760.1"/>
    <property type="molecule type" value="Genomic_DNA"/>
</dbReference>
<dbReference type="RefSeq" id="WP_001307251.1">
    <property type="nucleotide sequence ID" value="NC_011741.1"/>
</dbReference>
<dbReference type="SMR" id="B7M2B1"/>
<dbReference type="KEGG" id="ecr:ECIAI1_1906"/>
<dbReference type="HOGENOM" id="CLU_005316_6_2_6"/>
<dbReference type="GO" id="GO:0005737">
    <property type="term" value="C:cytoplasm"/>
    <property type="evidence" value="ECO:0007669"/>
    <property type="project" value="UniProtKB-SubCell"/>
</dbReference>
<dbReference type="GO" id="GO:0003723">
    <property type="term" value="F:RNA binding"/>
    <property type="evidence" value="ECO:0007669"/>
    <property type="project" value="UniProtKB-KW"/>
</dbReference>
<dbReference type="GO" id="GO:0009383">
    <property type="term" value="F:rRNA (cytosine-C5-)-methyltransferase activity"/>
    <property type="evidence" value="ECO:0007669"/>
    <property type="project" value="TreeGrafter"/>
</dbReference>
<dbReference type="GO" id="GO:0070475">
    <property type="term" value="P:rRNA base methylation"/>
    <property type="evidence" value="ECO:0007669"/>
    <property type="project" value="TreeGrafter"/>
</dbReference>
<dbReference type="CDD" id="cd02440">
    <property type="entry name" value="AdoMet_MTases"/>
    <property type="match status" value="1"/>
</dbReference>
<dbReference type="FunFam" id="3.10.450.720:FF:000001">
    <property type="entry name" value="Ribosomal RNA small subunit methyltransferase F"/>
    <property type="match status" value="1"/>
</dbReference>
<dbReference type="FunFam" id="3.40.50.150:FF:000079">
    <property type="entry name" value="Ribosomal RNA small subunit methyltransferase F"/>
    <property type="match status" value="1"/>
</dbReference>
<dbReference type="Gene3D" id="3.10.450.720">
    <property type="match status" value="1"/>
</dbReference>
<dbReference type="Gene3D" id="3.40.50.150">
    <property type="entry name" value="Vaccinia Virus protein VP39"/>
    <property type="match status" value="1"/>
</dbReference>
<dbReference type="HAMAP" id="MF_01579">
    <property type="entry name" value="16SrRNA_methyltr_F"/>
    <property type="match status" value="1"/>
</dbReference>
<dbReference type="InterPro" id="IPR031341">
    <property type="entry name" value="Methyltr_RsmF_N"/>
</dbReference>
<dbReference type="InterPro" id="IPR049560">
    <property type="entry name" value="MeTrfase_RsmB-F_NOP2_cat"/>
</dbReference>
<dbReference type="InterPro" id="IPR001678">
    <property type="entry name" value="MeTrfase_RsmB-F_NOP2_dom"/>
</dbReference>
<dbReference type="InterPro" id="IPR027391">
    <property type="entry name" value="Nol1_Nop2_Fmu_2"/>
</dbReference>
<dbReference type="InterPro" id="IPR011023">
    <property type="entry name" value="Nop2p"/>
</dbReference>
<dbReference type="InterPro" id="IPR023267">
    <property type="entry name" value="RCMT"/>
</dbReference>
<dbReference type="InterPro" id="IPR023545">
    <property type="entry name" value="rRNA_ssu_MeTfrase_F"/>
</dbReference>
<dbReference type="InterPro" id="IPR018314">
    <property type="entry name" value="RsmB/NOL1/NOP2-like_CS"/>
</dbReference>
<dbReference type="InterPro" id="IPR029063">
    <property type="entry name" value="SAM-dependent_MTases_sf"/>
</dbReference>
<dbReference type="InterPro" id="IPR048457">
    <property type="entry name" value="YebU_pre-PUA_dom"/>
</dbReference>
<dbReference type="NCBIfam" id="TIGR00446">
    <property type="entry name" value="nop2p"/>
    <property type="match status" value="1"/>
</dbReference>
<dbReference type="NCBIfam" id="NF008898">
    <property type="entry name" value="PRK11933.1"/>
    <property type="match status" value="1"/>
</dbReference>
<dbReference type="PANTHER" id="PTHR22807:SF30">
    <property type="entry name" value="28S RRNA (CYTOSINE(4447)-C(5))-METHYLTRANSFERASE-RELATED"/>
    <property type="match status" value="1"/>
</dbReference>
<dbReference type="PANTHER" id="PTHR22807">
    <property type="entry name" value="NOP2 YEAST -RELATED NOL1/NOP2/FMU SUN DOMAIN-CONTAINING"/>
    <property type="match status" value="1"/>
</dbReference>
<dbReference type="Pfam" id="PF01189">
    <property type="entry name" value="Methyltr_RsmB-F"/>
    <property type="match status" value="1"/>
</dbReference>
<dbReference type="Pfam" id="PF17125">
    <property type="entry name" value="Methyltr_RsmF_N"/>
    <property type="match status" value="1"/>
</dbReference>
<dbReference type="Pfam" id="PF13636">
    <property type="entry name" value="Methyltranf_PUA"/>
    <property type="match status" value="1"/>
</dbReference>
<dbReference type="Pfam" id="PF21150">
    <property type="entry name" value="YebU_pre-PUA_dom"/>
    <property type="match status" value="1"/>
</dbReference>
<dbReference type="PRINTS" id="PR02008">
    <property type="entry name" value="RCMTFAMILY"/>
</dbReference>
<dbReference type="SUPFAM" id="SSF53335">
    <property type="entry name" value="S-adenosyl-L-methionine-dependent methyltransferases"/>
    <property type="match status" value="1"/>
</dbReference>
<dbReference type="PROSITE" id="PS01153">
    <property type="entry name" value="NOL1_NOP2_SUN"/>
    <property type="match status" value="1"/>
</dbReference>
<dbReference type="PROSITE" id="PS51686">
    <property type="entry name" value="SAM_MT_RSMB_NOP"/>
    <property type="match status" value="1"/>
</dbReference>
<name>RSMF_ECO8A</name>
<protein>
    <recommendedName>
        <fullName evidence="1">Ribosomal RNA small subunit methyltransferase F</fullName>
        <ecNumber evidence="1">2.1.1.178</ecNumber>
    </recommendedName>
    <alternativeName>
        <fullName evidence="1">16S rRNA m5C1407 methyltransferase</fullName>
    </alternativeName>
    <alternativeName>
        <fullName evidence="1">rRNA (cytosine-C(5)-)-methyltransferase RsmF</fullName>
    </alternativeName>
</protein>